<dbReference type="GO" id="GO:0005615">
    <property type="term" value="C:extracellular space"/>
    <property type="evidence" value="ECO:0000314"/>
    <property type="project" value="UniProtKB"/>
</dbReference>
<dbReference type="GO" id="GO:0090729">
    <property type="term" value="F:toxin activity"/>
    <property type="evidence" value="ECO:0007669"/>
    <property type="project" value="UniProtKB-KW"/>
</dbReference>
<dbReference type="GO" id="GO:0045776">
    <property type="term" value="P:negative regulation of blood pressure"/>
    <property type="evidence" value="ECO:0000314"/>
    <property type="project" value="UniProtKB"/>
</dbReference>
<dbReference type="GO" id="GO:0045986">
    <property type="term" value="P:negative regulation of smooth muscle contraction"/>
    <property type="evidence" value="ECO:0000314"/>
    <property type="project" value="UniProtKB"/>
</dbReference>
<dbReference type="GO" id="GO:0045777">
    <property type="term" value="P:positive regulation of blood pressure"/>
    <property type="evidence" value="ECO:0000314"/>
    <property type="project" value="UniProtKB"/>
</dbReference>
<dbReference type="GO" id="GO:0045987">
    <property type="term" value="P:positive regulation of smooth muscle contraction"/>
    <property type="evidence" value="ECO:0000314"/>
    <property type="project" value="UniProtKB"/>
</dbReference>
<dbReference type="GO" id="GO:0042310">
    <property type="term" value="P:vasoconstriction"/>
    <property type="evidence" value="ECO:0007669"/>
    <property type="project" value="UniProtKB-KW"/>
</dbReference>
<dbReference type="GO" id="GO:0042311">
    <property type="term" value="P:vasodilation"/>
    <property type="evidence" value="ECO:0007669"/>
    <property type="project" value="UniProtKB-KW"/>
</dbReference>
<evidence type="ECO:0000269" key="1">
    <source>
    </source>
</evidence>
<evidence type="ECO:0000305" key="2"/>
<proteinExistence type="evidence at protein level"/>
<reference evidence="2" key="1">
    <citation type="journal article" date="1995" name="Peptides">
        <title>Isolation and biological activity of [Trp5]bradykinin from the plasma of the phylogenetically ancient fish, the bowfin and the longnosed gar.</title>
        <authorList>
            <person name="Conlon J.M."/>
            <person name="Platzack B."/>
            <person name="Marra L.E."/>
            <person name="Youson J.H."/>
            <person name="Olson K.R."/>
        </authorList>
    </citation>
    <scope>PROTEIN SEQUENCE</scope>
    <scope>FUNCTION</scope>
    <scope>SUBCELLULAR LOCATION</scope>
    <scope>TISSUE SPECIFICITY</scope>
    <source>
        <tissue evidence="1">Plasma</tissue>
    </source>
</reference>
<keyword id="KW-0903">Direct protein sequencing</keyword>
<keyword id="KW-1213">G-protein coupled receptor impairing toxin</keyword>
<keyword id="KW-0964">Secreted</keyword>
<keyword id="KW-0800">Toxin</keyword>
<keyword id="KW-0838">Vasoactive</keyword>
<keyword id="KW-0839">Vasoconstrictor</keyword>
<keyword id="KW-0840">Vasodilator</keyword>
<comment type="function">
    <text evidence="1">Induces smooth muscle dilation and contraction. Intra-arterial injection induces a significant decrease in ventral aortic blood pressure of between 5 and 10 minutes duration followed by a dose dependent increase in ventral aortic blood pressure of between 30 and 60 minutes duration. May target bradykinin receptors (BDKRB).</text>
</comment>
<comment type="subcellular location">
    <subcellularLocation>
        <location evidence="1">Secreted</location>
    </subcellularLocation>
</comment>
<comment type="tissue specificity">
    <text evidence="1">Plasma.</text>
</comment>
<comment type="similarity">
    <text evidence="2">Belongs to the bradykinin-related peptide family.</text>
</comment>
<name>BRK_AMICA</name>
<organism>
    <name type="scientific">Amia calva</name>
    <name type="common">Bowfin</name>
    <dbReference type="NCBI Taxonomy" id="7924"/>
    <lineage>
        <taxon>Eukaryota</taxon>
        <taxon>Metazoa</taxon>
        <taxon>Chordata</taxon>
        <taxon>Craniata</taxon>
        <taxon>Vertebrata</taxon>
        <taxon>Euteleostomi</taxon>
        <taxon>Actinopterygii</taxon>
        <taxon>Neopterygii</taxon>
        <taxon>Holostei</taxon>
        <taxon>Amiiformes</taxon>
        <taxon>Amiidae</taxon>
        <taxon>Amia</taxon>
    </lineage>
</organism>
<accession>P84773</accession>
<accession>Q9PRJ4</accession>
<feature type="peptide" id="PRO_0000223884" description="[Trp5]-bradykinin">
    <location>
        <begin position="1"/>
        <end position="9"/>
    </location>
</feature>
<protein>
    <recommendedName>
        <fullName>[Trp5]-bradykinin</fullName>
    </recommendedName>
</protein>
<sequence length="9" mass="1099">RPPGWSPFR</sequence>